<protein>
    <recommendedName>
        <fullName evidence="1">UPF0340 protein LACR_0494</fullName>
    </recommendedName>
</protein>
<dbReference type="EMBL" id="CP000425">
    <property type="protein sequence ID" value="ABJ72094.1"/>
    <property type="molecule type" value="Genomic_DNA"/>
</dbReference>
<dbReference type="RefSeq" id="WP_011675514.1">
    <property type="nucleotide sequence ID" value="NC_008527.1"/>
</dbReference>
<dbReference type="SMR" id="Q031M8"/>
<dbReference type="KEGG" id="llc:LACR_0494"/>
<dbReference type="HOGENOM" id="CLU_106658_0_0_9"/>
<dbReference type="Proteomes" id="UP000000240">
    <property type="component" value="Chromosome"/>
</dbReference>
<dbReference type="Gene3D" id="3.40.50.10360">
    <property type="entry name" value="Hypothetical protein TT1679"/>
    <property type="match status" value="1"/>
</dbReference>
<dbReference type="HAMAP" id="MF_00800">
    <property type="entry name" value="UPF0340"/>
    <property type="match status" value="1"/>
</dbReference>
<dbReference type="InterPro" id="IPR028345">
    <property type="entry name" value="Antibiotic_NAT-like"/>
</dbReference>
<dbReference type="InterPro" id="IPR006340">
    <property type="entry name" value="DUF436"/>
</dbReference>
<dbReference type="NCBIfam" id="TIGR01440">
    <property type="entry name" value="TIGR01440 family protein"/>
    <property type="match status" value="1"/>
</dbReference>
<dbReference type="Pfam" id="PF04260">
    <property type="entry name" value="DUF436"/>
    <property type="match status" value="1"/>
</dbReference>
<dbReference type="PIRSF" id="PIRSF007510">
    <property type="entry name" value="UCP007510"/>
    <property type="match status" value="1"/>
</dbReference>
<dbReference type="SUPFAM" id="SSF110710">
    <property type="entry name" value="TTHA0583/YokD-like"/>
    <property type="match status" value="1"/>
</dbReference>
<organism>
    <name type="scientific">Lactococcus lactis subsp. cremoris (strain SK11)</name>
    <dbReference type="NCBI Taxonomy" id="272622"/>
    <lineage>
        <taxon>Bacteria</taxon>
        <taxon>Bacillati</taxon>
        <taxon>Bacillota</taxon>
        <taxon>Bacilli</taxon>
        <taxon>Lactobacillales</taxon>
        <taxon>Streptococcaceae</taxon>
        <taxon>Lactococcus</taxon>
        <taxon>Lactococcus cremoris subsp. cremoris</taxon>
    </lineage>
</organism>
<comment type="similarity">
    <text evidence="1">Belongs to the UPF0340 family.</text>
</comment>
<evidence type="ECO:0000255" key="1">
    <source>
        <dbReference type="HAMAP-Rule" id="MF_00800"/>
    </source>
</evidence>
<accession>Q031M8</accession>
<sequence length="180" mass="19429">MDLEKLKEETQIIIDDVLKQTEIKSGQVFVLGLSSSEVNGGLIGHASSAEIGQVIVSVIHKTLSDKGIYLAVQACEHLNRALLIEEELADKKDWEIVSVVPQLHAGGSGQVAAYQLFKSPVEVEHIVAQAGLDIGDTSIGMHVKHVQIPVRPISKELGGAHVTSLKSRPKLIGGERARYE</sequence>
<proteinExistence type="inferred from homology"/>
<name>Y494_LACLS</name>
<gene>
    <name type="ordered locus">LACR_0494</name>
</gene>
<feature type="chain" id="PRO_1000046976" description="UPF0340 protein LACR_0494">
    <location>
        <begin position="1"/>
        <end position="180"/>
    </location>
</feature>
<reference key="1">
    <citation type="journal article" date="2006" name="Proc. Natl. Acad. Sci. U.S.A.">
        <title>Comparative genomics of the lactic acid bacteria.</title>
        <authorList>
            <person name="Makarova K.S."/>
            <person name="Slesarev A."/>
            <person name="Wolf Y.I."/>
            <person name="Sorokin A."/>
            <person name="Mirkin B."/>
            <person name="Koonin E.V."/>
            <person name="Pavlov A."/>
            <person name="Pavlova N."/>
            <person name="Karamychev V."/>
            <person name="Polouchine N."/>
            <person name="Shakhova V."/>
            <person name="Grigoriev I."/>
            <person name="Lou Y."/>
            <person name="Rohksar D."/>
            <person name="Lucas S."/>
            <person name="Huang K."/>
            <person name="Goodstein D.M."/>
            <person name="Hawkins T."/>
            <person name="Plengvidhya V."/>
            <person name="Welker D."/>
            <person name="Hughes J."/>
            <person name="Goh Y."/>
            <person name="Benson A."/>
            <person name="Baldwin K."/>
            <person name="Lee J.-H."/>
            <person name="Diaz-Muniz I."/>
            <person name="Dosti B."/>
            <person name="Smeianov V."/>
            <person name="Wechter W."/>
            <person name="Barabote R."/>
            <person name="Lorca G."/>
            <person name="Altermann E."/>
            <person name="Barrangou R."/>
            <person name="Ganesan B."/>
            <person name="Xie Y."/>
            <person name="Rawsthorne H."/>
            <person name="Tamir D."/>
            <person name="Parker C."/>
            <person name="Breidt F."/>
            <person name="Broadbent J.R."/>
            <person name="Hutkins R."/>
            <person name="O'Sullivan D."/>
            <person name="Steele J."/>
            <person name="Unlu G."/>
            <person name="Saier M.H. Jr."/>
            <person name="Klaenhammer T."/>
            <person name="Richardson P."/>
            <person name="Kozyavkin S."/>
            <person name="Weimer B.C."/>
            <person name="Mills D.A."/>
        </authorList>
    </citation>
    <scope>NUCLEOTIDE SEQUENCE [LARGE SCALE GENOMIC DNA]</scope>
    <source>
        <strain>SK11</strain>
    </source>
</reference>